<gene>
    <name type="ordered locus">BQ2027_MB3441</name>
</gene>
<keyword id="KW-1185">Reference proteome</keyword>
<proteinExistence type="inferred from homology"/>
<name>Y3441_MYCBO</name>
<evidence type="ECO:0000305" key="1"/>
<sequence length="99" mass="11010">MRATVGLVEAIGIRELRQHASRYLARVEAGEELGVTNKGRLVARLIPVQAAERSREALIESGVLIPARRPQNLLDVTAEPARGRKRTLSDVLNEMRDEQ</sequence>
<reference key="1">
    <citation type="journal article" date="2003" name="Proc. Natl. Acad. Sci. U.S.A.">
        <title>The complete genome sequence of Mycobacterium bovis.</title>
        <authorList>
            <person name="Garnier T."/>
            <person name="Eiglmeier K."/>
            <person name="Camus J.-C."/>
            <person name="Medina N."/>
            <person name="Mansoor H."/>
            <person name="Pryor M."/>
            <person name="Duthoy S."/>
            <person name="Grondin S."/>
            <person name="Lacroix C."/>
            <person name="Monsempe C."/>
            <person name="Simon S."/>
            <person name="Harris B."/>
            <person name="Atkin R."/>
            <person name="Doggett J."/>
            <person name="Mayes R."/>
            <person name="Keating L."/>
            <person name="Wheeler P.R."/>
            <person name="Parkhill J."/>
            <person name="Barrell B.G."/>
            <person name="Cole S.T."/>
            <person name="Gordon S.V."/>
            <person name="Hewinson R.G."/>
        </authorList>
    </citation>
    <scope>NUCLEOTIDE SEQUENCE [LARGE SCALE GENOMIC DNA]</scope>
    <source>
        <strain>ATCC BAA-935 / AF2122/97</strain>
    </source>
</reference>
<reference key="2">
    <citation type="journal article" date="2017" name="Genome Announc.">
        <title>Updated reference genome sequence and annotation of Mycobacterium bovis AF2122/97.</title>
        <authorList>
            <person name="Malone K.M."/>
            <person name="Farrell D."/>
            <person name="Stuber T.P."/>
            <person name="Schubert O.T."/>
            <person name="Aebersold R."/>
            <person name="Robbe-Austerman S."/>
            <person name="Gordon S.V."/>
        </authorList>
    </citation>
    <scope>NUCLEOTIDE SEQUENCE [LARGE SCALE GENOMIC DNA]</scope>
    <scope>GENOME REANNOTATION</scope>
    <source>
        <strain>ATCC BAA-935 / AF2122/97</strain>
    </source>
</reference>
<dbReference type="EMBL" id="LT708304">
    <property type="protein sequence ID" value="SIU02069.1"/>
    <property type="molecule type" value="Genomic_DNA"/>
</dbReference>
<dbReference type="RefSeq" id="NP_857081.1">
    <property type="nucleotide sequence ID" value="NC_002945.3"/>
</dbReference>
<dbReference type="SMR" id="P65078"/>
<dbReference type="KEGG" id="mbo:BQ2027_MB3441"/>
<dbReference type="PATRIC" id="fig|233413.5.peg.3776"/>
<dbReference type="Proteomes" id="UP000001419">
    <property type="component" value="Chromosome"/>
</dbReference>
<dbReference type="GO" id="GO:0097351">
    <property type="term" value="F:toxin sequestering activity"/>
    <property type="evidence" value="ECO:0007669"/>
    <property type="project" value="TreeGrafter"/>
</dbReference>
<dbReference type="FunFam" id="3.40.1620.10:FF:000002">
    <property type="entry name" value="Antitoxin"/>
    <property type="match status" value="1"/>
</dbReference>
<dbReference type="Gene3D" id="3.40.1620.10">
    <property type="entry name" value="YefM-like domain"/>
    <property type="match status" value="1"/>
</dbReference>
<dbReference type="InterPro" id="IPR006442">
    <property type="entry name" value="Antitoxin_Phd/YefM"/>
</dbReference>
<dbReference type="InterPro" id="IPR051416">
    <property type="entry name" value="phD-YefM_TA_antitoxins"/>
</dbReference>
<dbReference type="InterPro" id="IPR036165">
    <property type="entry name" value="YefM-like_sf"/>
</dbReference>
<dbReference type="NCBIfam" id="TIGR01552">
    <property type="entry name" value="phd_fam"/>
    <property type="match status" value="1"/>
</dbReference>
<dbReference type="PANTHER" id="PTHR35377:SF5">
    <property type="entry name" value="ANTITOXIN VAPB46"/>
    <property type="match status" value="1"/>
</dbReference>
<dbReference type="PANTHER" id="PTHR35377">
    <property type="entry name" value="ANTITOXIN VAPB49-RELATED-RELATED"/>
    <property type="match status" value="1"/>
</dbReference>
<dbReference type="Pfam" id="PF02604">
    <property type="entry name" value="PhdYeFM_antitox"/>
    <property type="match status" value="1"/>
</dbReference>
<dbReference type="SUPFAM" id="SSF143120">
    <property type="entry name" value="YefM-like"/>
    <property type="match status" value="1"/>
</dbReference>
<comment type="similarity">
    <text evidence="1">Belongs to the phD/YefM antitoxin family.</text>
</comment>
<accession>P65078</accession>
<accession>A0A1R3Y470</accession>
<accession>Q50718</accession>
<accession>X2BN63</accession>
<feature type="chain" id="PRO_0000104128" description="Uncharacterized protein Mb3441">
    <location>
        <begin position="1"/>
        <end position="99"/>
    </location>
</feature>
<protein>
    <recommendedName>
        <fullName>Uncharacterized protein Mb3441</fullName>
    </recommendedName>
</protein>
<organism>
    <name type="scientific">Mycobacterium bovis (strain ATCC BAA-935 / AF2122/97)</name>
    <dbReference type="NCBI Taxonomy" id="233413"/>
    <lineage>
        <taxon>Bacteria</taxon>
        <taxon>Bacillati</taxon>
        <taxon>Actinomycetota</taxon>
        <taxon>Actinomycetes</taxon>
        <taxon>Mycobacteriales</taxon>
        <taxon>Mycobacteriaceae</taxon>
        <taxon>Mycobacterium</taxon>
        <taxon>Mycobacterium tuberculosis complex</taxon>
    </lineage>
</organism>